<gene>
    <name evidence="1" type="primary">hfq</name>
    <name type="ordered locus">mlr0402</name>
</gene>
<comment type="function">
    <text evidence="1">RNA chaperone that binds small regulatory RNA (sRNAs) and mRNAs to facilitate mRNA translational regulation in response to envelope stress, environmental stress and changes in metabolite concentrations. Also binds with high specificity to tRNAs.</text>
</comment>
<comment type="subunit">
    <text evidence="1">Homohexamer.</text>
</comment>
<comment type="similarity">
    <text evidence="1">Belongs to the Hfq family.</text>
</comment>
<proteinExistence type="inferred from homology"/>
<name>HFQ_RHILO</name>
<protein>
    <recommendedName>
        <fullName evidence="1">RNA-binding protein Hfq</fullName>
    </recommendedName>
</protein>
<organism>
    <name type="scientific">Mesorhizobium japonicum (strain LMG 29417 / CECT 9101 / MAFF 303099)</name>
    <name type="common">Mesorhizobium loti (strain MAFF 303099)</name>
    <dbReference type="NCBI Taxonomy" id="266835"/>
    <lineage>
        <taxon>Bacteria</taxon>
        <taxon>Pseudomonadati</taxon>
        <taxon>Pseudomonadota</taxon>
        <taxon>Alphaproteobacteria</taxon>
        <taxon>Hyphomicrobiales</taxon>
        <taxon>Phyllobacteriaceae</taxon>
        <taxon>Mesorhizobium</taxon>
    </lineage>
</organism>
<feature type="chain" id="PRO_0000095661" description="RNA-binding protein Hfq">
    <location>
        <begin position="1"/>
        <end position="81"/>
    </location>
</feature>
<feature type="domain" description="Sm" evidence="2">
    <location>
        <begin position="10"/>
        <end position="70"/>
    </location>
</feature>
<sequence length="81" mass="9068">MAERSQNLQDLFLNSVRKSKNPLTIFLINGVKLTGVVTSFDNFCVLLRRDGHSQLVYKHAISTIMPSQPVQMFDGEESQGA</sequence>
<dbReference type="EMBL" id="BA000012">
    <property type="protein sequence ID" value="BAB47991.1"/>
    <property type="molecule type" value="Genomic_DNA"/>
</dbReference>
<dbReference type="RefSeq" id="WP_006202172.1">
    <property type="nucleotide sequence ID" value="NC_002678.2"/>
</dbReference>
<dbReference type="SMR" id="Q98MX2"/>
<dbReference type="GeneID" id="91561336"/>
<dbReference type="KEGG" id="mlo:mlr0402"/>
<dbReference type="eggNOG" id="COG1923">
    <property type="taxonomic scope" value="Bacteria"/>
</dbReference>
<dbReference type="HOGENOM" id="CLU_113688_0_0_5"/>
<dbReference type="Proteomes" id="UP000000552">
    <property type="component" value="Chromosome"/>
</dbReference>
<dbReference type="GO" id="GO:0005829">
    <property type="term" value="C:cytosol"/>
    <property type="evidence" value="ECO:0007669"/>
    <property type="project" value="TreeGrafter"/>
</dbReference>
<dbReference type="GO" id="GO:0003723">
    <property type="term" value="F:RNA binding"/>
    <property type="evidence" value="ECO:0007669"/>
    <property type="project" value="UniProtKB-UniRule"/>
</dbReference>
<dbReference type="GO" id="GO:0006355">
    <property type="term" value="P:regulation of DNA-templated transcription"/>
    <property type="evidence" value="ECO:0007669"/>
    <property type="project" value="InterPro"/>
</dbReference>
<dbReference type="GO" id="GO:0043487">
    <property type="term" value="P:regulation of RNA stability"/>
    <property type="evidence" value="ECO:0007669"/>
    <property type="project" value="TreeGrafter"/>
</dbReference>
<dbReference type="GO" id="GO:0045974">
    <property type="term" value="P:regulation of translation, ncRNA-mediated"/>
    <property type="evidence" value="ECO:0007669"/>
    <property type="project" value="TreeGrafter"/>
</dbReference>
<dbReference type="CDD" id="cd01716">
    <property type="entry name" value="Hfq"/>
    <property type="match status" value="1"/>
</dbReference>
<dbReference type="Gene3D" id="2.30.30.100">
    <property type="match status" value="1"/>
</dbReference>
<dbReference type="HAMAP" id="MF_00436">
    <property type="entry name" value="Hfq"/>
    <property type="match status" value="1"/>
</dbReference>
<dbReference type="InterPro" id="IPR005001">
    <property type="entry name" value="Hfq"/>
</dbReference>
<dbReference type="InterPro" id="IPR010920">
    <property type="entry name" value="LSM_dom_sf"/>
</dbReference>
<dbReference type="InterPro" id="IPR047575">
    <property type="entry name" value="Sm"/>
</dbReference>
<dbReference type="NCBIfam" id="TIGR02383">
    <property type="entry name" value="Hfq"/>
    <property type="match status" value="1"/>
</dbReference>
<dbReference type="NCBIfam" id="NF001602">
    <property type="entry name" value="PRK00395.1"/>
    <property type="match status" value="1"/>
</dbReference>
<dbReference type="PANTHER" id="PTHR34772">
    <property type="entry name" value="RNA-BINDING PROTEIN HFQ"/>
    <property type="match status" value="1"/>
</dbReference>
<dbReference type="PANTHER" id="PTHR34772:SF1">
    <property type="entry name" value="RNA-BINDING PROTEIN HFQ"/>
    <property type="match status" value="1"/>
</dbReference>
<dbReference type="Pfam" id="PF17209">
    <property type="entry name" value="Hfq"/>
    <property type="match status" value="1"/>
</dbReference>
<dbReference type="SUPFAM" id="SSF50182">
    <property type="entry name" value="Sm-like ribonucleoproteins"/>
    <property type="match status" value="1"/>
</dbReference>
<dbReference type="PROSITE" id="PS52002">
    <property type="entry name" value="SM"/>
    <property type="match status" value="1"/>
</dbReference>
<reference key="1">
    <citation type="journal article" date="2000" name="DNA Res.">
        <title>Complete genome structure of the nitrogen-fixing symbiotic bacterium Mesorhizobium loti.</title>
        <authorList>
            <person name="Kaneko T."/>
            <person name="Nakamura Y."/>
            <person name="Sato S."/>
            <person name="Asamizu E."/>
            <person name="Kato T."/>
            <person name="Sasamoto S."/>
            <person name="Watanabe A."/>
            <person name="Idesawa K."/>
            <person name="Ishikawa A."/>
            <person name="Kawashima K."/>
            <person name="Kimura T."/>
            <person name="Kishida Y."/>
            <person name="Kiyokawa C."/>
            <person name="Kohara M."/>
            <person name="Matsumoto M."/>
            <person name="Matsuno A."/>
            <person name="Mochizuki Y."/>
            <person name="Nakayama S."/>
            <person name="Nakazaki N."/>
            <person name="Shimpo S."/>
            <person name="Sugimoto M."/>
            <person name="Takeuchi C."/>
            <person name="Yamada M."/>
            <person name="Tabata S."/>
        </authorList>
    </citation>
    <scope>NUCLEOTIDE SEQUENCE [LARGE SCALE GENOMIC DNA]</scope>
    <source>
        <strain>LMG 29417 / CECT 9101 / MAFF 303099</strain>
    </source>
</reference>
<keyword id="KW-0694">RNA-binding</keyword>
<keyword id="KW-0346">Stress response</keyword>
<evidence type="ECO:0000255" key="1">
    <source>
        <dbReference type="HAMAP-Rule" id="MF_00436"/>
    </source>
</evidence>
<evidence type="ECO:0000255" key="2">
    <source>
        <dbReference type="PROSITE-ProRule" id="PRU01346"/>
    </source>
</evidence>
<accession>Q98MX2</accession>